<feature type="chain" id="PRO_1000201644" description="Ribosome-binding factor A">
    <location>
        <begin position="1"/>
        <end position="139"/>
    </location>
</feature>
<gene>
    <name evidence="1" type="primary">rbfA</name>
    <name type="ordered locus">M446_2610</name>
</gene>
<comment type="function">
    <text evidence="1">One of several proteins that assist in the late maturation steps of the functional core of the 30S ribosomal subunit. Associates with free 30S ribosomal subunits (but not with 30S subunits that are part of 70S ribosomes or polysomes). Required for efficient processing of 16S rRNA. May interact with the 5'-terminal helix region of 16S rRNA.</text>
</comment>
<comment type="subunit">
    <text evidence="1">Monomer. Binds 30S ribosomal subunits, but not 50S ribosomal subunits or 70S ribosomes.</text>
</comment>
<comment type="subcellular location">
    <subcellularLocation>
        <location evidence="1">Cytoplasm</location>
    </subcellularLocation>
</comment>
<comment type="similarity">
    <text evidence="1">Belongs to the RbfA family.</text>
</comment>
<proteinExistence type="inferred from homology"/>
<name>RBFA_METS4</name>
<dbReference type="EMBL" id="CP000943">
    <property type="protein sequence ID" value="ACA17049.1"/>
    <property type="molecule type" value="Genomic_DNA"/>
</dbReference>
<dbReference type="RefSeq" id="WP_012332455.1">
    <property type="nucleotide sequence ID" value="NC_010511.1"/>
</dbReference>
<dbReference type="SMR" id="B0UL49"/>
<dbReference type="STRING" id="426117.M446_2610"/>
<dbReference type="KEGG" id="met:M446_2610"/>
<dbReference type="eggNOG" id="COG0858">
    <property type="taxonomic scope" value="Bacteria"/>
</dbReference>
<dbReference type="HOGENOM" id="CLU_089475_1_0_5"/>
<dbReference type="GO" id="GO:0005829">
    <property type="term" value="C:cytosol"/>
    <property type="evidence" value="ECO:0007669"/>
    <property type="project" value="TreeGrafter"/>
</dbReference>
<dbReference type="GO" id="GO:0043024">
    <property type="term" value="F:ribosomal small subunit binding"/>
    <property type="evidence" value="ECO:0007669"/>
    <property type="project" value="TreeGrafter"/>
</dbReference>
<dbReference type="GO" id="GO:0030490">
    <property type="term" value="P:maturation of SSU-rRNA"/>
    <property type="evidence" value="ECO:0007669"/>
    <property type="project" value="UniProtKB-UniRule"/>
</dbReference>
<dbReference type="Gene3D" id="3.30.300.20">
    <property type="match status" value="1"/>
</dbReference>
<dbReference type="HAMAP" id="MF_00003">
    <property type="entry name" value="RbfA"/>
    <property type="match status" value="1"/>
</dbReference>
<dbReference type="InterPro" id="IPR015946">
    <property type="entry name" value="KH_dom-like_a/b"/>
</dbReference>
<dbReference type="InterPro" id="IPR000238">
    <property type="entry name" value="RbfA"/>
</dbReference>
<dbReference type="InterPro" id="IPR023799">
    <property type="entry name" value="RbfA_dom_sf"/>
</dbReference>
<dbReference type="InterPro" id="IPR020053">
    <property type="entry name" value="Ribosome-bd_factorA_CS"/>
</dbReference>
<dbReference type="NCBIfam" id="NF001802">
    <property type="entry name" value="PRK00521.2-5"/>
    <property type="match status" value="1"/>
</dbReference>
<dbReference type="NCBIfam" id="TIGR00082">
    <property type="entry name" value="rbfA"/>
    <property type="match status" value="1"/>
</dbReference>
<dbReference type="PANTHER" id="PTHR33515">
    <property type="entry name" value="RIBOSOME-BINDING FACTOR A, CHLOROPLASTIC-RELATED"/>
    <property type="match status" value="1"/>
</dbReference>
<dbReference type="PANTHER" id="PTHR33515:SF1">
    <property type="entry name" value="RIBOSOME-BINDING FACTOR A, CHLOROPLASTIC-RELATED"/>
    <property type="match status" value="1"/>
</dbReference>
<dbReference type="Pfam" id="PF02033">
    <property type="entry name" value="RBFA"/>
    <property type="match status" value="1"/>
</dbReference>
<dbReference type="SUPFAM" id="SSF89919">
    <property type="entry name" value="Ribosome-binding factor A, RbfA"/>
    <property type="match status" value="1"/>
</dbReference>
<dbReference type="PROSITE" id="PS01319">
    <property type="entry name" value="RBFA"/>
    <property type="match status" value="1"/>
</dbReference>
<protein>
    <recommendedName>
        <fullName evidence="1">Ribosome-binding factor A</fullName>
    </recommendedName>
</protein>
<reference key="1">
    <citation type="submission" date="2008-02" db="EMBL/GenBank/DDBJ databases">
        <title>Complete sequence of chromosome of Methylobacterium sp. 4-46.</title>
        <authorList>
            <consortium name="US DOE Joint Genome Institute"/>
            <person name="Copeland A."/>
            <person name="Lucas S."/>
            <person name="Lapidus A."/>
            <person name="Glavina del Rio T."/>
            <person name="Dalin E."/>
            <person name="Tice H."/>
            <person name="Bruce D."/>
            <person name="Goodwin L."/>
            <person name="Pitluck S."/>
            <person name="Chertkov O."/>
            <person name="Brettin T."/>
            <person name="Detter J.C."/>
            <person name="Han C."/>
            <person name="Kuske C.R."/>
            <person name="Schmutz J."/>
            <person name="Larimer F."/>
            <person name="Land M."/>
            <person name="Hauser L."/>
            <person name="Kyrpides N."/>
            <person name="Ivanova N."/>
            <person name="Marx C.J."/>
            <person name="Richardson P."/>
        </authorList>
    </citation>
    <scope>NUCLEOTIDE SEQUENCE [LARGE SCALE GENOMIC DNA]</scope>
    <source>
        <strain>4-46</strain>
    </source>
</reference>
<evidence type="ECO:0000255" key="1">
    <source>
        <dbReference type="HAMAP-Rule" id="MF_00003"/>
    </source>
</evidence>
<keyword id="KW-0963">Cytoplasm</keyword>
<keyword id="KW-0690">Ribosome biogenesis</keyword>
<organism>
    <name type="scientific">Methylobacterium sp. (strain 4-46)</name>
    <dbReference type="NCBI Taxonomy" id="426117"/>
    <lineage>
        <taxon>Bacteria</taxon>
        <taxon>Pseudomonadati</taxon>
        <taxon>Pseudomonadota</taxon>
        <taxon>Alphaproteobacteria</taxon>
        <taxon>Hyphomicrobiales</taxon>
        <taxon>Methylobacteriaceae</taxon>
        <taxon>Methylobacterium</taxon>
    </lineage>
</organism>
<sequence length="139" mass="15719">MRKPTETAGPSQRQQRVAELVRHAIAEVLSRGDLQDPVLSRHVITVPEVRMSPDLKLATAYVMPLGGQDEAPVLEALERNRKALRQEVARRVNLKFAPELRFRRDETFDEAARIDRLLRSEKVQRDLGGEQDDAGDPDA</sequence>
<accession>B0UL49</accession>